<evidence type="ECO:0000255" key="1">
    <source>
        <dbReference type="HAMAP-Rule" id="MF_01006"/>
    </source>
</evidence>
<reference key="1">
    <citation type="submission" date="2006-12" db="EMBL/GenBank/DDBJ databases">
        <title>Complete sequence of Mycobacterium vanbaalenii PYR-1.</title>
        <authorList>
            <consortium name="US DOE Joint Genome Institute"/>
            <person name="Copeland A."/>
            <person name="Lucas S."/>
            <person name="Lapidus A."/>
            <person name="Barry K."/>
            <person name="Detter J.C."/>
            <person name="Glavina del Rio T."/>
            <person name="Hammon N."/>
            <person name="Israni S."/>
            <person name="Dalin E."/>
            <person name="Tice H."/>
            <person name="Pitluck S."/>
            <person name="Singan V."/>
            <person name="Schmutz J."/>
            <person name="Larimer F."/>
            <person name="Land M."/>
            <person name="Hauser L."/>
            <person name="Kyrpides N."/>
            <person name="Anderson I.J."/>
            <person name="Miller C."/>
            <person name="Richardson P."/>
        </authorList>
    </citation>
    <scope>NUCLEOTIDE SEQUENCE [LARGE SCALE GENOMIC DNA]</scope>
    <source>
        <strain>DSM 7251 / JCM 13017 / BCRC 16820 / KCTC 9966 / NRRL B-24157 / PYR-1</strain>
    </source>
</reference>
<accession>A1TAS8</accession>
<sequence>MSWLQVVVLSVLQGLTEFLPVSSSGHLAIASRVFFEDDAGASFTAVSQLGTEVAVLVYFARDIVRIVKAWFAGLFRAGQRSADYWLGWWVIIGTIPISVVGLLFKDEIRTGARNLWLVATAMIVFSFVIAAAEYYGRQARRVEQLTWRDSIIVGLAQCLALVPGVSRSGATISAGLFLGMHRELAARFGFLLAIPAVFASGLFSLPDAFEPVGEGMSASGAQLFVSIVIAFVVGYAAVAWFLRFLVRHSMYWFVGYRIVLGTVVLVLLSAGVVSAI</sequence>
<feature type="chain" id="PRO_0000290734" description="Undecaprenyl-diphosphatase">
    <location>
        <begin position="1"/>
        <end position="276"/>
    </location>
</feature>
<feature type="transmembrane region" description="Helical" evidence="1">
    <location>
        <begin position="1"/>
        <end position="21"/>
    </location>
</feature>
<feature type="transmembrane region" description="Helical" evidence="1">
    <location>
        <begin position="39"/>
        <end position="59"/>
    </location>
</feature>
<feature type="transmembrane region" description="Helical" evidence="1">
    <location>
        <begin position="84"/>
        <end position="104"/>
    </location>
</feature>
<feature type="transmembrane region" description="Helical" evidence="1">
    <location>
        <begin position="115"/>
        <end position="135"/>
    </location>
</feature>
<feature type="transmembrane region" description="Helical" evidence="1">
    <location>
        <begin position="188"/>
        <end position="208"/>
    </location>
</feature>
<feature type="transmembrane region" description="Helical" evidence="1">
    <location>
        <begin position="222"/>
        <end position="242"/>
    </location>
</feature>
<feature type="transmembrane region" description="Helical" evidence="1">
    <location>
        <begin position="253"/>
        <end position="273"/>
    </location>
</feature>
<proteinExistence type="inferred from homology"/>
<comment type="function">
    <text evidence="1">Catalyzes the dephosphorylation of undecaprenyl diphosphate (UPP). Confers resistance to bacitracin.</text>
</comment>
<comment type="catalytic activity">
    <reaction evidence="1">
        <text>di-trans,octa-cis-undecaprenyl diphosphate + H2O = di-trans,octa-cis-undecaprenyl phosphate + phosphate + H(+)</text>
        <dbReference type="Rhea" id="RHEA:28094"/>
        <dbReference type="ChEBI" id="CHEBI:15377"/>
        <dbReference type="ChEBI" id="CHEBI:15378"/>
        <dbReference type="ChEBI" id="CHEBI:43474"/>
        <dbReference type="ChEBI" id="CHEBI:58405"/>
        <dbReference type="ChEBI" id="CHEBI:60392"/>
        <dbReference type="EC" id="3.6.1.27"/>
    </reaction>
</comment>
<comment type="subcellular location">
    <subcellularLocation>
        <location evidence="1">Cell membrane</location>
        <topology evidence="1">Multi-pass membrane protein</topology>
    </subcellularLocation>
</comment>
<comment type="miscellaneous">
    <text>Bacitracin is thought to be involved in the inhibition of peptidoglycan synthesis by sequestering undecaprenyl diphosphate, thereby reducing the pool of lipid carrier available.</text>
</comment>
<comment type="similarity">
    <text evidence="1">Belongs to the UppP family.</text>
</comment>
<organism>
    <name type="scientific">Mycolicibacterium vanbaalenii (strain DSM 7251 / JCM 13017 / BCRC 16820 / KCTC 9966 / NRRL B-24157 / PYR-1)</name>
    <name type="common">Mycobacterium vanbaalenii</name>
    <dbReference type="NCBI Taxonomy" id="350058"/>
    <lineage>
        <taxon>Bacteria</taxon>
        <taxon>Bacillati</taxon>
        <taxon>Actinomycetota</taxon>
        <taxon>Actinomycetes</taxon>
        <taxon>Mycobacteriales</taxon>
        <taxon>Mycobacteriaceae</taxon>
        <taxon>Mycolicibacterium</taxon>
    </lineage>
</organism>
<gene>
    <name evidence="1" type="primary">uppP</name>
    <name type="ordered locus">Mvan_3483</name>
</gene>
<name>UPPP_MYCVP</name>
<keyword id="KW-0046">Antibiotic resistance</keyword>
<keyword id="KW-1003">Cell membrane</keyword>
<keyword id="KW-0133">Cell shape</keyword>
<keyword id="KW-0961">Cell wall biogenesis/degradation</keyword>
<keyword id="KW-0378">Hydrolase</keyword>
<keyword id="KW-0472">Membrane</keyword>
<keyword id="KW-0573">Peptidoglycan synthesis</keyword>
<keyword id="KW-0812">Transmembrane</keyword>
<keyword id="KW-1133">Transmembrane helix</keyword>
<dbReference type="EC" id="3.6.1.27" evidence="1"/>
<dbReference type="EMBL" id="CP000511">
    <property type="protein sequence ID" value="ABM14278.1"/>
    <property type="molecule type" value="Genomic_DNA"/>
</dbReference>
<dbReference type="RefSeq" id="WP_011780682.1">
    <property type="nucleotide sequence ID" value="NZ_JACKSD010000223.1"/>
</dbReference>
<dbReference type="SMR" id="A1TAS8"/>
<dbReference type="STRING" id="350058.Mvan_3483"/>
<dbReference type="KEGG" id="mva:Mvan_3483"/>
<dbReference type="eggNOG" id="COG1968">
    <property type="taxonomic scope" value="Bacteria"/>
</dbReference>
<dbReference type="HOGENOM" id="CLU_060296_1_0_11"/>
<dbReference type="Proteomes" id="UP000009159">
    <property type="component" value="Chromosome"/>
</dbReference>
<dbReference type="GO" id="GO:0005886">
    <property type="term" value="C:plasma membrane"/>
    <property type="evidence" value="ECO:0007669"/>
    <property type="project" value="UniProtKB-SubCell"/>
</dbReference>
<dbReference type="GO" id="GO:0050380">
    <property type="term" value="F:undecaprenyl-diphosphatase activity"/>
    <property type="evidence" value="ECO:0007669"/>
    <property type="project" value="UniProtKB-UniRule"/>
</dbReference>
<dbReference type="GO" id="GO:0071555">
    <property type="term" value="P:cell wall organization"/>
    <property type="evidence" value="ECO:0007669"/>
    <property type="project" value="UniProtKB-KW"/>
</dbReference>
<dbReference type="GO" id="GO:0009252">
    <property type="term" value="P:peptidoglycan biosynthetic process"/>
    <property type="evidence" value="ECO:0007669"/>
    <property type="project" value="UniProtKB-KW"/>
</dbReference>
<dbReference type="GO" id="GO:0008360">
    <property type="term" value="P:regulation of cell shape"/>
    <property type="evidence" value="ECO:0007669"/>
    <property type="project" value="UniProtKB-KW"/>
</dbReference>
<dbReference type="GO" id="GO:0046677">
    <property type="term" value="P:response to antibiotic"/>
    <property type="evidence" value="ECO:0007669"/>
    <property type="project" value="UniProtKB-UniRule"/>
</dbReference>
<dbReference type="HAMAP" id="MF_01006">
    <property type="entry name" value="Undec_diphosphatase"/>
    <property type="match status" value="1"/>
</dbReference>
<dbReference type="InterPro" id="IPR003824">
    <property type="entry name" value="UppP"/>
</dbReference>
<dbReference type="NCBIfam" id="NF001392">
    <property type="entry name" value="PRK00281.2-1"/>
    <property type="match status" value="1"/>
</dbReference>
<dbReference type="NCBIfam" id="TIGR00753">
    <property type="entry name" value="undec_PP_bacA"/>
    <property type="match status" value="1"/>
</dbReference>
<dbReference type="PANTHER" id="PTHR30622">
    <property type="entry name" value="UNDECAPRENYL-DIPHOSPHATASE"/>
    <property type="match status" value="1"/>
</dbReference>
<dbReference type="PANTHER" id="PTHR30622:SF4">
    <property type="entry name" value="UNDECAPRENYL-DIPHOSPHATASE"/>
    <property type="match status" value="1"/>
</dbReference>
<dbReference type="Pfam" id="PF02673">
    <property type="entry name" value="BacA"/>
    <property type="match status" value="1"/>
</dbReference>
<protein>
    <recommendedName>
        <fullName evidence="1">Undecaprenyl-diphosphatase</fullName>
        <ecNumber evidence="1">3.6.1.27</ecNumber>
    </recommendedName>
    <alternativeName>
        <fullName evidence="1">Bacitracin resistance protein</fullName>
    </alternativeName>
    <alternativeName>
        <fullName evidence="1">Undecaprenyl pyrophosphate phosphatase</fullName>
    </alternativeName>
</protein>